<organism>
    <name type="scientific">Campylobacter fetus subsp. fetus (strain 82-40)</name>
    <dbReference type="NCBI Taxonomy" id="360106"/>
    <lineage>
        <taxon>Bacteria</taxon>
        <taxon>Pseudomonadati</taxon>
        <taxon>Campylobacterota</taxon>
        <taxon>Epsilonproteobacteria</taxon>
        <taxon>Campylobacterales</taxon>
        <taxon>Campylobacteraceae</taxon>
        <taxon>Campylobacter</taxon>
    </lineage>
</organism>
<evidence type="ECO:0000255" key="1">
    <source>
        <dbReference type="HAMAP-Rule" id="MF_00384"/>
    </source>
</evidence>
<accession>A0RQZ6</accession>
<sequence>MKILTPATSANLGPGFDSLGLSLKLYNEVTITKQNFTSVCISGEGSDKIGLKKNNTFVNIFNETMLYLTGKTPNFRFNFINNIPFSRGLGSSSSVIVGAIASAYHMAGFKVDRALVLNQALKYESHPDNISPAVWGGFTSNIVHKGTVYTQKADISSDLRAVVVIPDKPTSTKQSRGKLPKTYPMADVISNVSHAAFLTACFIKQDYENLRLASIDKMHEIRRMHGLKELFRVREIAYLSGALMSNLSGSGSSFLNLAHKDRAQTLRDILQLEFPEFKVEIYELDNNGFILQS</sequence>
<keyword id="KW-0028">Amino-acid biosynthesis</keyword>
<keyword id="KW-0067">ATP-binding</keyword>
<keyword id="KW-0963">Cytoplasm</keyword>
<keyword id="KW-0418">Kinase</keyword>
<keyword id="KW-0547">Nucleotide-binding</keyword>
<keyword id="KW-0791">Threonine biosynthesis</keyword>
<keyword id="KW-0808">Transferase</keyword>
<protein>
    <recommendedName>
        <fullName evidence="1">Homoserine kinase</fullName>
        <shortName evidence="1">HK</shortName>
        <shortName evidence="1">HSK</shortName>
        <ecNumber evidence="1">2.7.1.39</ecNumber>
    </recommendedName>
</protein>
<dbReference type="EC" id="2.7.1.39" evidence="1"/>
<dbReference type="EMBL" id="CP000487">
    <property type="protein sequence ID" value="ABK82237.1"/>
    <property type="molecule type" value="Genomic_DNA"/>
</dbReference>
<dbReference type="RefSeq" id="WP_011732230.1">
    <property type="nucleotide sequence ID" value="NC_008599.1"/>
</dbReference>
<dbReference type="SMR" id="A0RQZ6"/>
<dbReference type="GeneID" id="61065312"/>
<dbReference type="KEGG" id="cff:CFF8240_1495"/>
<dbReference type="eggNOG" id="COG0083">
    <property type="taxonomic scope" value="Bacteria"/>
</dbReference>
<dbReference type="HOGENOM" id="CLU_041243_0_0_7"/>
<dbReference type="UniPathway" id="UPA00050">
    <property type="reaction ID" value="UER00064"/>
</dbReference>
<dbReference type="Proteomes" id="UP000000760">
    <property type="component" value="Chromosome"/>
</dbReference>
<dbReference type="GO" id="GO:0005737">
    <property type="term" value="C:cytoplasm"/>
    <property type="evidence" value="ECO:0007669"/>
    <property type="project" value="UniProtKB-SubCell"/>
</dbReference>
<dbReference type="GO" id="GO:0005524">
    <property type="term" value="F:ATP binding"/>
    <property type="evidence" value="ECO:0007669"/>
    <property type="project" value="UniProtKB-UniRule"/>
</dbReference>
<dbReference type="GO" id="GO:0004413">
    <property type="term" value="F:homoserine kinase activity"/>
    <property type="evidence" value="ECO:0007669"/>
    <property type="project" value="UniProtKB-UniRule"/>
</dbReference>
<dbReference type="GO" id="GO:0009088">
    <property type="term" value="P:threonine biosynthetic process"/>
    <property type="evidence" value="ECO:0007669"/>
    <property type="project" value="UniProtKB-UniRule"/>
</dbReference>
<dbReference type="Gene3D" id="3.30.230.10">
    <property type="match status" value="1"/>
</dbReference>
<dbReference type="Gene3D" id="3.30.70.890">
    <property type="entry name" value="GHMP kinase, C-terminal domain"/>
    <property type="match status" value="1"/>
</dbReference>
<dbReference type="HAMAP" id="MF_00384">
    <property type="entry name" value="Homoser_kinase"/>
    <property type="match status" value="1"/>
</dbReference>
<dbReference type="InterPro" id="IPR036554">
    <property type="entry name" value="GHMP_kinase_C_sf"/>
</dbReference>
<dbReference type="InterPro" id="IPR006204">
    <property type="entry name" value="GHMP_kinase_N_dom"/>
</dbReference>
<dbReference type="InterPro" id="IPR006203">
    <property type="entry name" value="GHMP_knse_ATP-bd_CS"/>
</dbReference>
<dbReference type="InterPro" id="IPR000870">
    <property type="entry name" value="Homoserine_kinase"/>
</dbReference>
<dbReference type="InterPro" id="IPR020568">
    <property type="entry name" value="Ribosomal_Su5_D2-typ_SF"/>
</dbReference>
<dbReference type="InterPro" id="IPR014721">
    <property type="entry name" value="Ribsml_uS5_D2-typ_fold_subgr"/>
</dbReference>
<dbReference type="NCBIfam" id="TIGR00191">
    <property type="entry name" value="thrB"/>
    <property type="match status" value="1"/>
</dbReference>
<dbReference type="PANTHER" id="PTHR20861:SF1">
    <property type="entry name" value="HOMOSERINE KINASE"/>
    <property type="match status" value="1"/>
</dbReference>
<dbReference type="PANTHER" id="PTHR20861">
    <property type="entry name" value="HOMOSERINE/4-DIPHOSPHOCYTIDYL-2-C-METHYL-D-ERYTHRITOL KINASE"/>
    <property type="match status" value="1"/>
</dbReference>
<dbReference type="Pfam" id="PF00288">
    <property type="entry name" value="GHMP_kinases_N"/>
    <property type="match status" value="1"/>
</dbReference>
<dbReference type="PIRSF" id="PIRSF000676">
    <property type="entry name" value="Homoser_kin"/>
    <property type="match status" value="1"/>
</dbReference>
<dbReference type="PRINTS" id="PR00958">
    <property type="entry name" value="HOMSERKINASE"/>
</dbReference>
<dbReference type="SUPFAM" id="SSF55060">
    <property type="entry name" value="GHMP Kinase, C-terminal domain"/>
    <property type="match status" value="1"/>
</dbReference>
<dbReference type="SUPFAM" id="SSF54211">
    <property type="entry name" value="Ribosomal protein S5 domain 2-like"/>
    <property type="match status" value="1"/>
</dbReference>
<dbReference type="PROSITE" id="PS00627">
    <property type="entry name" value="GHMP_KINASES_ATP"/>
    <property type="match status" value="1"/>
</dbReference>
<comment type="function">
    <text evidence="1">Catalyzes the ATP-dependent phosphorylation of L-homoserine to L-homoserine phosphate.</text>
</comment>
<comment type="catalytic activity">
    <reaction evidence="1">
        <text>L-homoserine + ATP = O-phospho-L-homoserine + ADP + H(+)</text>
        <dbReference type="Rhea" id="RHEA:13985"/>
        <dbReference type="ChEBI" id="CHEBI:15378"/>
        <dbReference type="ChEBI" id="CHEBI:30616"/>
        <dbReference type="ChEBI" id="CHEBI:57476"/>
        <dbReference type="ChEBI" id="CHEBI:57590"/>
        <dbReference type="ChEBI" id="CHEBI:456216"/>
        <dbReference type="EC" id="2.7.1.39"/>
    </reaction>
</comment>
<comment type="pathway">
    <text evidence="1">Amino-acid biosynthesis; L-threonine biosynthesis; L-threonine from L-aspartate: step 4/5.</text>
</comment>
<comment type="subcellular location">
    <subcellularLocation>
        <location evidence="1">Cytoplasm</location>
    </subcellularLocation>
</comment>
<comment type="similarity">
    <text evidence="1">Belongs to the GHMP kinase family. Homoserine kinase subfamily.</text>
</comment>
<reference key="1">
    <citation type="submission" date="2006-11" db="EMBL/GenBank/DDBJ databases">
        <title>Sequence of Campylobacter fetus subsp. fetus 82-40.</title>
        <authorList>
            <person name="Fouts D.E."/>
            <person name="Nelson K.E."/>
        </authorList>
    </citation>
    <scope>NUCLEOTIDE SEQUENCE [LARGE SCALE GENOMIC DNA]</scope>
    <source>
        <strain>82-40</strain>
    </source>
</reference>
<proteinExistence type="inferred from homology"/>
<gene>
    <name evidence="1" type="primary">thrB</name>
    <name type="ordered locus">CFF8240_1495</name>
</gene>
<name>KHSE_CAMFF</name>
<feature type="chain" id="PRO_1000049114" description="Homoserine kinase">
    <location>
        <begin position="1"/>
        <end position="293"/>
    </location>
</feature>
<feature type="binding site" evidence="1">
    <location>
        <begin position="84"/>
        <end position="94"/>
    </location>
    <ligand>
        <name>ATP</name>
        <dbReference type="ChEBI" id="CHEBI:30616"/>
    </ligand>
</feature>